<reference key="1">
    <citation type="journal article" date="2008" name="PLoS Genet.">
        <title>Complete genome sequence of the N2-fixing broad host range endophyte Klebsiella pneumoniae 342 and virulence predictions verified in mice.</title>
        <authorList>
            <person name="Fouts D.E."/>
            <person name="Tyler H.L."/>
            <person name="DeBoy R.T."/>
            <person name="Daugherty S."/>
            <person name="Ren Q."/>
            <person name="Badger J.H."/>
            <person name="Durkin A.S."/>
            <person name="Huot H."/>
            <person name="Shrivastava S."/>
            <person name="Kothari S."/>
            <person name="Dodson R.J."/>
            <person name="Mohamoud Y."/>
            <person name="Khouri H."/>
            <person name="Roesch L.F.W."/>
            <person name="Krogfelt K.A."/>
            <person name="Struve C."/>
            <person name="Triplett E.W."/>
            <person name="Methe B.A."/>
        </authorList>
    </citation>
    <scope>NUCLEOTIDE SEQUENCE [LARGE SCALE GENOMIC DNA]</scope>
    <source>
        <strain>342</strain>
    </source>
</reference>
<evidence type="ECO:0000255" key="1">
    <source>
        <dbReference type="HAMAP-Rule" id="MF_01151"/>
    </source>
</evidence>
<evidence type="ECO:0000256" key="2">
    <source>
        <dbReference type="SAM" id="MobiDB-lite"/>
    </source>
</evidence>
<protein>
    <recommendedName>
        <fullName evidence="1">Protein GrpE</fullName>
    </recommendedName>
    <alternativeName>
        <fullName evidence="1">HSP-70 cofactor</fullName>
    </alternativeName>
</protein>
<gene>
    <name evidence="1" type="primary">grpE</name>
    <name type="ordered locus">KPK_1184</name>
</gene>
<proteinExistence type="inferred from homology"/>
<feature type="chain" id="PRO_1000137580" description="Protein GrpE">
    <location>
        <begin position="1"/>
        <end position="196"/>
    </location>
</feature>
<feature type="region of interest" description="Disordered" evidence="2">
    <location>
        <begin position="1"/>
        <end position="41"/>
    </location>
</feature>
<organism>
    <name type="scientific">Klebsiella pneumoniae (strain 342)</name>
    <dbReference type="NCBI Taxonomy" id="507522"/>
    <lineage>
        <taxon>Bacteria</taxon>
        <taxon>Pseudomonadati</taxon>
        <taxon>Pseudomonadota</taxon>
        <taxon>Gammaproteobacteria</taxon>
        <taxon>Enterobacterales</taxon>
        <taxon>Enterobacteriaceae</taxon>
        <taxon>Klebsiella/Raoultella group</taxon>
        <taxon>Klebsiella</taxon>
        <taxon>Klebsiella pneumoniae complex</taxon>
    </lineage>
</organism>
<dbReference type="EMBL" id="CP000964">
    <property type="protein sequence ID" value="ACI09549.1"/>
    <property type="molecule type" value="Genomic_DNA"/>
</dbReference>
<dbReference type="SMR" id="B5XVJ9"/>
<dbReference type="KEGG" id="kpe:KPK_1184"/>
<dbReference type="HOGENOM" id="CLU_057217_6_0_6"/>
<dbReference type="Proteomes" id="UP000001734">
    <property type="component" value="Chromosome"/>
</dbReference>
<dbReference type="GO" id="GO:0005829">
    <property type="term" value="C:cytosol"/>
    <property type="evidence" value="ECO:0007669"/>
    <property type="project" value="TreeGrafter"/>
</dbReference>
<dbReference type="GO" id="GO:0000774">
    <property type="term" value="F:adenyl-nucleotide exchange factor activity"/>
    <property type="evidence" value="ECO:0007669"/>
    <property type="project" value="InterPro"/>
</dbReference>
<dbReference type="GO" id="GO:0042803">
    <property type="term" value="F:protein homodimerization activity"/>
    <property type="evidence" value="ECO:0007669"/>
    <property type="project" value="InterPro"/>
</dbReference>
<dbReference type="GO" id="GO:0051087">
    <property type="term" value="F:protein-folding chaperone binding"/>
    <property type="evidence" value="ECO:0007669"/>
    <property type="project" value="InterPro"/>
</dbReference>
<dbReference type="GO" id="GO:0051082">
    <property type="term" value="F:unfolded protein binding"/>
    <property type="evidence" value="ECO:0007669"/>
    <property type="project" value="TreeGrafter"/>
</dbReference>
<dbReference type="GO" id="GO:0006457">
    <property type="term" value="P:protein folding"/>
    <property type="evidence" value="ECO:0007669"/>
    <property type="project" value="InterPro"/>
</dbReference>
<dbReference type="CDD" id="cd00446">
    <property type="entry name" value="GrpE"/>
    <property type="match status" value="1"/>
</dbReference>
<dbReference type="FunFam" id="2.30.22.10:FF:000001">
    <property type="entry name" value="Protein GrpE"/>
    <property type="match status" value="1"/>
</dbReference>
<dbReference type="FunFam" id="3.90.20.20:FF:000001">
    <property type="entry name" value="Protein GrpE"/>
    <property type="match status" value="1"/>
</dbReference>
<dbReference type="Gene3D" id="3.90.20.20">
    <property type="match status" value="1"/>
</dbReference>
<dbReference type="Gene3D" id="2.30.22.10">
    <property type="entry name" value="Head domain of nucleotide exchange factor GrpE"/>
    <property type="match status" value="1"/>
</dbReference>
<dbReference type="HAMAP" id="MF_01151">
    <property type="entry name" value="GrpE"/>
    <property type="match status" value="1"/>
</dbReference>
<dbReference type="InterPro" id="IPR000740">
    <property type="entry name" value="GrpE"/>
</dbReference>
<dbReference type="InterPro" id="IPR013805">
    <property type="entry name" value="GrpE_coiled_coil"/>
</dbReference>
<dbReference type="InterPro" id="IPR009012">
    <property type="entry name" value="GrpE_head"/>
</dbReference>
<dbReference type="NCBIfam" id="NF007655">
    <property type="entry name" value="PRK10325.1"/>
    <property type="match status" value="1"/>
</dbReference>
<dbReference type="NCBIfam" id="NF010738">
    <property type="entry name" value="PRK14140.1"/>
    <property type="match status" value="1"/>
</dbReference>
<dbReference type="NCBIfam" id="NF010748">
    <property type="entry name" value="PRK14150.1"/>
    <property type="match status" value="1"/>
</dbReference>
<dbReference type="PANTHER" id="PTHR21237">
    <property type="entry name" value="GRPE PROTEIN"/>
    <property type="match status" value="1"/>
</dbReference>
<dbReference type="PANTHER" id="PTHR21237:SF23">
    <property type="entry name" value="GRPE PROTEIN HOMOLOG, MITOCHONDRIAL"/>
    <property type="match status" value="1"/>
</dbReference>
<dbReference type="Pfam" id="PF01025">
    <property type="entry name" value="GrpE"/>
    <property type="match status" value="1"/>
</dbReference>
<dbReference type="PRINTS" id="PR00773">
    <property type="entry name" value="GRPEPROTEIN"/>
</dbReference>
<dbReference type="SUPFAM" id="SSF58014">
    <property type="entry name" value="Coiled-coil domain of nucleotide exchange factor GrpE"/>
    <property type="match status" value="1"/>
</dbReference>
<dbReference type="SUPFAM" id="SSF51064">
    <property type="entry name" value="Head domain of nucleotide exchange factor GrpE"/>
    <property type="match status" value="1"/>
</dbReference>
<dbReference type="PROSITE" id="PS01071">
    <property type="entry name" value="GRPE"/>
    <property type="match status" value="1"/>
</dbReference>
<sequence>MSSKEQKTPEGQAPEEIITEQHDDVEAVEPEVSAEQVDPRDEKIANLEAQLAEAQKREREVMLRAKADEDNLRRRTEQDIEKAHKFALEKFVNELLPVIDSLDRALEVADKANPDLAPMVEGIELTLKSMLDVVRKFGVEVIADTNVPLDPNVHQAIAMVESEDVAAGNVLAVMQKGYTLNGRTIRAAMVTVAKAK</sequence>
<comment type="function">
    <text evidence="1">Participates actively in the response to hyperosmotic and heat shock by preventing the aggregation of stress-denatured proteins, in association with DnaK and GrpE. It is the nucleotide exchange factor for DnaK and may function as a thermosensor. Unfolded proteins bind initially to DnaJ; upon interaction with the DnaJ-bound protein, DnaK hydrolyzes its bound ATP, resulting in the formation of a stable complex. GrpE releases ADP from DnaK; ATP binding to DnaK triggers the release of the substrate protein, thus completing the reaction cycle. Several rounds of ATP-dependent interactions between DnaJ, DnaK and GrpE are required for fully efficient folding.</text>
</comment>
<comment type="subunit">
    <text evidence="1">Homodimer.</text>
</comment>
<comment type="subcellular location">
    <subcellularLocation>
        <location evidence="1">Cytoplasm</location>
    </subcellularLocation>
</comment>
<comment type="similarity">
    <text evidence="1">Belongs to the GrpE family.</text>
</comment>
<name>GRPE_KLEP3</name>
<keyword id="KW-0143">Chaperone</keyword>
<keyword id="KW-0963">Cytoplasm</keyword>
<keyword id="KW-0346">Stress response</keyword>
<accession>B5XVJ9</accession>